<sequence length="213" mass="22472">IVGGSVTTIGQYPSMASLLFNNRQVCGGVIINNRSVLTAAHCPFGDAVSSWRFRVGSTNANSGGTVFTLSTIINHPSYNRWTLDNDISIMRAASNIGTSASVQPAGIAGSNYNLGDNQVVWATGWGATSAGGSLARFPGVNARHVQIWTVNQNTCASRYAAIGRTVTANMLCSGWLDVGGRDQCQGDSGGPLYHNRIVVAVVSRYTSWIQSNA</sequence>
<comment type="function">
    <text evidence="3">Fibrinolytic activity; shows preferential cleavage of Arg-Gly bonds in all three fibrinogen chains. Contact with the caterpillars causes severe bleeding, due the anticoagulant effect of the protein.</text>
</comment>
<comment type="activity regulation">
    <text evidence="3">Sensitive to serine proteinase inhibitors and thiol proteinase inhibitors.</text>
</comment>
<comment type="subcellular location">
    <subcellularLocation>
        <location evidence="3">Secreted</location>
        <location evidence="3">Extracellular space</location>
    </subcellularLocation>
</comment>
<comment type="tissue specificity">
    <text evidence="3">Hemolymph and saliva of the larval form (caterpillar).</text>
</comment>
<comment type="developmental stage">
    <text evidence="3">Larvae.</text>
</comment>
<comment type="similarity">
    <text evidence="2">Belongs to the peptidase S1 family.</text>
</comment>
<protein>
    <recommendedName>
        <fullName>Achelase-1</fullName>
        <ecNumber>3.4.21.-</ecNumber>
    </recommendedName>
    <alternativeName>
        <fullName>Achelase I</fullName>
    </alternativeName>
</protein>
<proteinExistence type="evidence at protein level"/>
<accession>P23604</accession>
<dbReference type="EC" id="3.4.21.-"/>
<dbReference type="PIR" id="S17537">
    <property type="entry name" value="S17537"/>
</dbReference>
<dbReference type="SMR" id="P23604"/>
<dbReference type="MEROPS" id="S01.420"/>
<dbReference type="GO" id="GO:0005576">
    <property type="term" value="C:extracellular region"/>
    <property type="evidence" value="ECO:0007669"/>
    <property type="project" value="UniProtKB-SubCell"/>
</dbReference>
<dbReference type="GO" id="GO:0004252">
    <property type="term" value="F:serine-type endopeptidase activity"/>
    <property type="evidence" value="ECO:0007669"/>
    <property type="project" value="InterPro"/>
</dbReference>
<dbReference type="GO" id="GO:0090729">
    <property type="term" value="F:toxin activity"/>
    <property type="evidence" value="ECO:0007669"/>
    <property type="project" value="UniProtKB-KW"/>
</dbReference>
<dbReference type="GO" id="GO:0006508">
    <property type="term" value="P:proteolysis"/>
    <property type="evidence" value="ECO:0007669"/>
    <property type="project" value="UniProtKB-KW"/>
</dbReference>
<dbReference type="CDD" id="cd00190">
    <property type="entry name" value="Tryp_SPc"/>
    <property type="match status" value="1"/>
</dbReference>
<dbReference type="FunFam" id="2.40.10.10:FF:000068">
    <property type="entry name" value="transmembrane protease serine 2"/>
    <property type="match status" value="1"/>
</dbReference>
<dbReference type="Gene3D" id="2.40.10.10">
    <property type="entry name" value="Trypsin-like serine proteases"/>
    <property type="match status" value="2"/>
</dbReference>
<dbReference type="InterPro" id="IPR050430">
    <property type="entry name" value="Peptidase_S1"/>
</dbReference>
<dbReference type="InterPro" id="IPR009003">
    <property type="entry name" value="Peptidase_S1_PA"/>
</dbReference>
<dbReference type="InterPro" id="IPR043504">
    <property type="entry name" value="Peptidase_S1_PA_chymotrypsin"/>
</dbReference>
<dbReference type="InterPro" id="IPR001314">
    <property type="entry name" value="Peptidase_S1A"/>
</dbReference>
<dbReference type="InterPro" id="IPR001254">
    <property type="entry name" value="Trypsin_dom"/>
</dbReference>
<dbReference type="InterPro" id="IPR018114">
    <property type="entry name" value="TRYPSIN_HIS"/>
</dbReference>
<dbReference type="InterPro" id="IPR033116">
    <property type="entry name" value="TRYPSIN_SER"/>
</dbReference>
<dbReference type="PANTHER" id="PTHR24276:SF98">
    <property type="entry name" value="FI18310P1-RELATED"/>
    <property type="match status" value="1"/>
</dbReference>
<dbReference type="PANTHER" id="PTHR24276">
    <property type="entry name" value="POLYSERASE-RELATED"/>
    <property type="match status" value="1"/>
</dbReference>
<dbReference type="Pfam" id="PF00089">
    <property type="entry name" value="Trypsin"/>
    <property type="match status" value="1"/>
</dbReference>
<dbReference type="PRINTS" id="PR00722">
    <property type="entry name" value="CHYMOTRYPSIN"/>
</dbReference>
<dbReference type="SMART" id="SM00020">
    <property type="entry name" value="Tryp_SPc"/>
    <property type="match status" value="1"/>
</dbReference>
<dbReference type="SUPFAM" id="SSF50494">
    <property type="entry name" value="Trypsin-like serine proteases"/>
    <property type="match status" value="1"/>
</dbReference>
<dbReference type="PROSITE" id="PS50240">
    <property type="entry name" value="TRYPSIN_DOM"/>
    <property type="match status" value="1"/>
</dbReference>
<dbReference type="PROSITE" id="PS00134">
    <property type="entry name" value="TRYPSIN_HIS"/>
    <property type="match status" value="1"/>
</dbReference>
<dbReference type="PROSITE" id="PS00135">
    <property type="entry name" value="TRYPSIN_SER"/>
    <property type="match status" value="1"/>
</dbReference>
<evidence type="ECO:0000250" key="1"/>
<evidence type="ECO:0000255" key="2">
    <source>
        <dbReference type="PROSITE-ProRule" id="PRU00274"/>
    </source>
</evidence>
<evidence type="ECO:0000269" key="3">
    <source>
    </source>
</evidence>
<organism>
    <name type="scientific">Lonomia achelous</name>
    <name type="common">Giant silkworm moth</name>
    <name type="synonym">Saturnid moth</name>
    <dbReference type="NCBI Taxonomy" id="7125"/>
    <lineage>
        <taxon>Eukaryota</taxon>
        <taxon>Metazoa</taxon>
        <taxon>Ecdysozoa</taxon>
        <taxon>Arthropoda</taxon>
        <taxon>Hexapoda</taxon>
        <taxon>Insecta</taxon>
        <taxon>Pterygota</taxon>
        <taxon>Neoptera</taxon>
        <taxon>Endopterygota</taxon>
        <taxon>Lepidoptera</taxon>
        <taxon>Glossata</taxon>
        <taxon>Ditrysia</taxon>
        <taxon>Bombycoidea</taxon>
        <taxon>Saturniidae</taxon>
        <taxon>Hemileucinae</taxon>
        <taxon>Lonomia</taxon>
    </lineage>
</organism>
<name>ACH1_LONAC</name>
<feature type="chain" id="PRO_0000088743" description="Achelase-1" evidence="3">
    <location>
        <begin position="1"/>
        <end position="213"/>
    </location>
</feature>
<feature type="domain" description="Peptidase S1" evidence="2">
    <location>
        <begin position="1"/>
        <end position="213"/>
    </location>
</feature>
<feature type="active site" description="Charge relay system" evidence="1">
    <location>
        <position position="41"/>
    </location>
</feature>
<feature type="active site" description="Charge relay system" evidence="1">
    <location>
        <position position="86"/>
    </location>
</feature>
<feature type="active site" description="Charge relay system" evidence="1">
    <location>
        <position position="188"/>
    </location>
</feature>
<feature type="disulfide bond" evidence="2">
    <location>
        <begin position="26"/>
        <end position="42"/>
    </location>
</feature>
<feature type="disulfide bond" evidence="2">
    <location>
        <begin position="155"/>
        <end position="172"/>
    </location>
</feature>
<reference key="1">
    <citation type="journal article" date="1991" name="Biochim. Biophys. Acta">
        <title>Isolation and complete amino acid sequence of two fibrinolytic proteinases from the toxic Saturnid caterpillar Lonomia achelous.</title>
        <authorList>
            <person name="Amarant T."/>
            <person name="Burkhart W."/>
            <person name="Levine H. III"/>
            <person name="Arocha-Pinango C.L."/>
            <person name="Parikh I."/>
        </authorList>
    </citation>
    <scope>PROTEIN SEQUENCE</scope>
    <scope>FUNCTION</scope>
    <scope>CATALYTIC ACTIVITY</scope>
    <scope>ACTIVITY REGULATION</scope>
    <scope>SUBCELLULAR LOCATION</scope>
    <scope>TISSUE SPECIFICITY</scope>
    <scope>DEVELOPMENTAL STAGE</scope>
    <source>
        <tissue>Hemolymph</tissue>
    </source>
</reference>
<keyword id="KW-0903">Direct protein sequencing</keyword>
<keyword id="KW-1015">Disulfide bond</keyword>
<keyword id="KW-1205">Fibrinolytic toxin</keyword>
<keyword id="KW-1199">Hemostasis impairing toxin</keyword>
<keyword id="KW-0378">Hydrolase</keyword>
<keyword id="KW-0645">Protease</keyword>
<keyword id="KW-0964">Secreted</keyword>
<keyword id="KW-0720">Serine protease</keyword>
<keyword id="KW-0800">Toxin</keyword>